<sequence>MKYDTSDLCDIYHEEVNVVEPLFSNFGGRTSFGGKITTVKCFEDNGLLFDLLEENGLGRVLVVDGGGSVRRALINAELAELALKNEWEGIVVYGAVRQVDDLAELDIGIQAMAAIPVGAADEGVGESDIRVNFGGVTFFSGDHLYADNTGIILSEDPLDIE</sequence>
<accession>Q66G87</accession>
<proteinExistence type="inferred from homology"/>
<dbReference type="EMBL" id="BX936398">
    <property type="protein sequence ID" value="CAH19335.1"/>
    <property type="molecule type" value="Genomic_DNA"/>
</dbReference>
<dbReference type="RefSeq" id="WP_002208945.1">
    <property type="nucleotide sequence ID" value="NZ_CP009712.1"/>
</dbReference>
<dbReference type="SMR" id="Q66G87"/>
<dbReference type="GeneID" id="57974491"/>
<dbReference type="KEGG" id="ypo:BZ17_2502"/>
<dbReference type="KEGG" id="yps:YPTB0095"/>
<dbReference type="PATRIC" id="fig|273123.14.peg.2623"/>
<dbReference type="Proteomes" id="UP000001011">
    <property type="component" value="Chromosome"/>
</dbReference>
<dbReference type="GO" id="GO:0005829">
    <property type="term" value="C:cytosol"/>
    <property type="evidence" value="ECO:0007669"/>
    <property type="project" value="TreeGrafter"/>
</dbReference>
<dbReference type="GO" id="GO:0060698">
    <property type="term" value="F:endoribonuclease inhibitor activity"/>
    <property type="evidence" value="ECO:0007669"/>
    <property type="project" value="UniProtKB-UniRule"/>
</dbReference>
<dbReference type="GO" id="GO:0019899">
    <property type="term" value="F:enzyme binding"/>
    <property type="evidence" value="ECO:0007669"/>
    <property type="project" value="UniProtKB-UniRule"/>
</dbReference>
<dbReference type="GO" id="GO:1902369">
    <property type="term" value="P:negative regulation of RNA catabolic process"/>
    <property type="evidence" value="ECO:0007669"/>
    <property type="project" value="TreeGrafter"/>
</dbReference>
<dbReference type="CDD" id="cd16841">
    <property type="entry name" value="RraA_family"/>
    <property type="match status" value="1"/>
</dbReference>
<dbReference type="Gene3D" id="3.50.30.40">
    <property type="entry name" value="Ribonuclease E inhibitor RraA/RraA-like"/>
    <property type="match status" value="1"/>
</dbReference>
<dbReference type="HAMAP" id="MF_00471">
    <property type="entry name" value="RraA"/>
    <property type="match status" value="1"/>
</dbReference>
<dbReference type="InterPro" id="IPR010203">
    <property type="entry name" value="RraA"/>
</dbReference>
<dbReference type="InterPro" id="IPR005493">
    <property type="entry name" value="RraA/RraA-like"/>
</dbReference>
<dbReference type="InterPro" id="IPR036704">
    <property type="entry name" value="RraA/RraA-like_sf"/>
</dbReference>
<dbReference type="InterPro" id="IPR014339">
    <property type="entry name" value="RraA_gpbac"/>
</dbReference>
<dbReference type="NCBIfam" id="TIGR01935">
    <property type="entry name" value="NOT-MenG"/>
    <property type="match status" value="1"/>
</dbReference>
<dbReference type="NCBIfam" id="NF006875">
    <property type="entry name" value="PRK09372.1"/>
    <property type="match status" value="1"/>
</dbReference>
<dbReference type="NCBIfam" id="TIGR02998">
    <property type="entry name" value="RraA_entero"/>
    <property type="match status" value="1"/>
</dbReference>
<dbReference type="PANTHER" id="PTHR33254">
    <property type="entry name" value="4-HYDROXY-4-METHYL-2-OXOGLUTARATE ALDOLASE 3-RELATED"/>
    <property type="match status" value="1"/>
</dbReference>
<dbReference type="PANTHER" id="PTHR33254:SF29">
    <property type="entry name" value="REGULATOR OF RIBONUCLEASE ACTIVITY A"/>
    <property type="match status" value="1"/>
</dbReference>
<dbReference type="Pfam" id="PF03737">
    <property type="entry name" value="RraA-like"/>
    <property type="match status" value="1"/>
</dbReference>
<dbReference type="SUPFAM" id="SSF89562">
    <property type="entry name" value="RraA-like"/>
    <property type="match status" value="1"/>
</dbReference>
<comment type="function">
    <text evidence="1">Globally modulates RNA abundance by binding to RNase E (Rne) and regulating its endonucleolytic activity. Can modulate Rne action in a substrate-dependent manner by altering the composition of the degradosome. Modulates RNA-binding and helicase activities of the degradosome.</text>
</comment>
<comment type="subunit">
    <text evidence="1">Homotrimer. Binds to both RNA-binding sites in the C-terminal region of Rne and to RhlB.</text>
</comment>
<comment type="subcellular location">
    <subcellularLocation>
        <location evidence="1">Cytoplasm</location>
    </subcellularLocation>
</comment>
<comment type="similarity">
    <text evidence="1">Belongs to the RraA family.</text>
</comment>
<keyword id="KW-0963">Cytoplasm</keyword>
<name>RRAA_YERPS</name>
<reference key="1">
    <citation type="journal article" date="2004" name="Proc. Natl. Acad. Sci. U.S.A.">
        <title>Insights into the evolution of Yersinia pestis through whole-genome comparison with Yersinia pseudotuberculosis.</title>
        <authorList>
            <person name="Chain P.S.G."/>
            <person name="Carniel E."/>
            <person name="Larimer F.W."/>
            <person name="Lamerdin J."/>
            <person name="Stoutland P.O."/>
            <person name="Regala W.M."/>
            <person name="Georgescu A.M."/>
            <person name="Vergez L.M."/>
            <person name="Land M.L."/>
            <person name="Motin V.L."/>
            <person name="Brubaker R.R."/>
            <person name="Fowler J."/>
            <person name="Hinnebusch J."/>
            <person name="Marceau M."/>
            <person name="Medigue C."/>
            <person name="Simonet M."/>
            <person name="Chenal-Francisque V."/>
            <person name="Souza B."/>
            <person name="Dacheux D."/>
            <person name="Elliott J.M."/>
            <person name="Derbise A."/>
            <person name="Hauser L.J."/>
            <person name="Garcia E."/>
        </authorList>
    </citation>
    <scope>NUCLEOTIDE SEQUENCE [LARGE SCALE GENOMIC DNA]</scope>
    <source>
        <strain>IP32953</strain>
    </source>
</reference>
<evidence type="ECO:0000255" key="1">
    <source>
        <dbReference type="HAMAP-Rule" id="MF_00471"/>
    </source>
</evidence>
<gene>
    <name evidence="1" type="primary">rraA</name>
    <name type="ordered locus">YPTB0095</name>
</gene>
<protein>
    <recommendedName>
        <fullName evidence="1">Regulator of ribonuclease activity A</fullName>
    </recommendedName>
</protein>
<organism>
    <name type="scientific">Yersinia pseudotuberculosis serotype I (strain IP32953)</name>
    <dbReference type="NCBI Taxonomy" id="273123"/>
    <lineage>
        <taxon>Bacteria</taxon>
        <taxon>Pseudomonadati</taxon>
        <taxon>Pseudomonadota</taxon>
        <taxon>Gammaproteobacteria</taxon>
        <taxon>Enterobacterales</taxon>
        <taxon>Yersiniaceae</taxon>
        <taxon>Yersinia</taxon>
    </lineage>
</organism>
<feature type="chain" id="PRO_0000209651" description="Regulator of ribonuclease activity A">
    <location>
        <begin position="1"/>
        <end position="161"/>
    </location>
</feature>